<evidence type="ECO:0000255" key="1">
    <source>
        <dbReference type="HAMAP-Rule" id="MF_00225"/>
    </source>
</evidence>
<dbReference type="EC" id="1.3.5.2" evidence="1"/>
<dbReference type="EMBL" id="CP000513">
    <property type="protein sequence ID" value="ABQ13775.1"/>
    <property type="molecule type" value="Genomic_DNA"/>
</dbReference>
<dbReference type="RefSeq" id="WP_012031002.1">
    <property type="nucleotide sequence ID" value="NC_009446.1"/>
</dbReference>
<dbReference type="SMR" id="A5EV79"/>
<dbReference type="STRING" id="246195.DNO_0669"/>
<dbReference type="KEGG" id="dno:DNO_0669"/>
<dbReference type="eggNOG" id="COG0167">
    <property type="taxonomic scope" value="Bacteria"/>
</dbReference>
<dbReference type="HOGENOM" id="CLU_013640_2_0_6"/>
<dbReference type="OrthoDB" id="9802377at2"/>
<dbReference type="UniPathway" id="UPA00070">
    <property type="reaction ID" value="UER00946"/>
</dbReference>
<dbReference type="Proteomes" id="UP000000248">
    <property type="component" value="Chromosome"/>
</dbReference>
<dbReference type="GO" id="GO:0005737">
    <property type="term" value="C:cytoplasm"/>
    <property type="evidence" value="ECO:0007669"/>
    <property type="project" value="InterPro"/>
</dbReference>
<dbReference type="GO" id="GO:0005886">
    <property type="term" value="C:plasma membrane"/>
    <property type="evidence" value="ECO:0007669"/>
    <property type="project" value="UniProtKB-SubCell"/>
</dbReference>
<dbReference type="GO" id="GO:0106430">
    <property type="term" value="F:dihydroorotate dehydrogenase (quinone) activity"/>
    <property type="evidence" value="ECO:0007669"/>
    <property type="project" value="UniProtKB-EC"/>
</dbReference>
<dbReference type="GO" id="GO:0006207">
    <property type="term" value="P:'de novo' pyrimidine nucleobase biosynthetic process"/>
    <property type="evidence" value="ECO:0007669"/>
    <property type="project" value="InterPro"/>
</dbReference>
<dbReference type="GO" id="GO:0044205">
    <property type="term" value="P:'de novo' UMP biosynthetic process"/>
    <property type="evidence" value="ECO:0007669"/>
    <property type="project" value="UniProtKB-UniRule"/>
</dbReference>
<dbReference type="CDD" id="cd04738">
    <property type="entry name" value="DHOD_2_like"/>
    <property type="match status" value="1"/>
</dbReference>
<dbReference type="Gene3D" id="3.20.20.70">
    <property type="entry name" value="Aldolase class I"/>
    <property type="match status" value="1"/>
</dbReference>
<dbReference type="HAMAP" id="MF_00225">
    <property type="entry name" value="DHO_dh_type2"/>
    <property type="match status" value="1"/>
</dbReference>
<dbReference type="InterPro" id="IPR013785">
    <property type="entry name" value="Aldolase_TIM"/>
</dbReference>
<dbReference type="InterPro" id="IPR050074">
    <property type="entry name" value="DHO_dehydrogenase"/>
</dbReference>
<dbReference type="InterPro" id="IPR012135">
    <property type="entry name" value="Dihydroorotate_DH_1_2"/>
</dbReference>
<dbReference type="InterPro" id="IPR005719">
    <property type="entry name" value="Dihydroorotate_DH_2"/>
</dbReference>
<dbReference type="InterPro" id="IPR005720">
    <property type="entry name" value="Dihydroorotate_DH_cat"/>
</dbReference>
<dbReference type="InterPro" id="IPR001295">
    <property type="entry name" value="Dihydroorotate_DH_CS"/>
</dbReference>
<dbReference type="NCBIfam" id="NF003645">
    <property type="entry name" value="PRK05286.1-2"/>
    <property type="match status" value="1"/>
</dbReference>
<dbReference type="NCBIfam" id="NF003652">
    <property type="entry name" value="PRK05286.2-5"/>
    <property type="match status" value="1"/>
</dbReference>
<dbReference type="NCBIfam" id="TIGR01036">
    <property type="entry name" value="pyrD_sub2"/>
    <property type="match status" value="1"/>
</dbReference>
<dbReference type="PANTHER" id="PTHR48109:SF4">
    <property type="entry name" value="DIHYDROOROTATE DEHYDROGENASE (QUINONE), MITOCHONDRIAL"/>
    <property type="match status" value="1"/>
</dbReference>
<dbReference type="PANTHER" id="PTHR48109">
    <property type="entry name" value="DIHYDROOROTATE DEHYDROGENASE (QUINONE), MITOCHONDRIAL-RELATED"/>
    <property type="match status" value="1"/>
</dbReference>
<dbReference type="Pfam" id="PF01180">
    <property type="entry name" value="DHO_dh"/>
    <property type="match status" value="1"/>
</dbReference>
<dbReference type="PIRSF" id="PIRSF000164">
    <property type="entry name" value="DHO_oxidase"/>
    <property type="match status" value="1"/>
</dbReference>
<dbReference type="SUPFAM" id="SSF51395">
    <property type="entry name" value="FMN-linked oxidoreductases"/>
    <property type="match status" value="1"/>
</dbReference>
<dbReference type="PROSITE" id="PS00911">
    <property type="entry name" value="DHODEHASE_1"/>
    <property type="match status" value="1"/>
</dbReference>
<organism>
    <name type="scientific">Dichelobacter nodosus (strain VCS1703A)</name>
    <dbReference type="NCBI Taxonomy" id="246195"/>
    <lineage>
        <taxon>Bacteria</taxon>
        <taxon>Pseudomonadati</taxon>
        <taxon>Pseudomonadota</taxon>
        <taxon>Gammaproteobacteria</taxon>
        <taxon>Cardiobacteriales</taxon>
        <taxon>Cardiobacteriaceae</taxon>
        <taxon>Dichelobacter</taxon>
    </lineage>
</organism>
<proteinExistence type="inferred from homology"/>
<reference key="1">
    <citation type="journal article" date="2007" name="Nat. Biotechnol.">
        <title>Genome sequence and identification of candidate vaccine antigens from the animal pathogen Dichelobacter nodosus.</title>
        <authorList>
            <person name="Myers G.S.A."/>
            <person name="Parker D."/>
            <person name="Al-Hasani K."/>
            <person name="Kennan R.M."/>
            <person name="Seemann T."/>
            <person name="Ren Q."/>
            <person name="Badger J.H."/>
            <person name="Selengut J.D."/>
            <person name="Deboy R.T."/>
            <person name="Tettelin H."/>
            <person name="Boyce J.D."/>
            <person name="McCarl V.P."/>
            <person name="Han X."/>
            <person name="Nelson W.C."/>
            <person name="Madupu R."/>
            <person name="Mohamoud Y."/>
            <person name="Holley T."/>
            <person name="Fedorova N."/>
            <person name="Khouri H."/>
            <person name="Bottomley S.P."/>
            <person name="Whittington R.J."/>
            <person name="Adler B."/>
            <person name="Songer J.G."/>
            <person name="Rood J.I."/>
            <person name="Paulsen I.T."/>
        </authorList>
    </citation>
    <scope>NUCLEOTIDE SEQUENCE [LARGE SCALE GENOMIC DNA]</scope>
    <source>
        <strain>VCS1703A</strain>
    </source>
</reference>
<gene>
    <name evidence="1" type="primary">pyrD</name>
    <name type="ordered locus">DNO_0669</name>
</gene>
<comment type="function">
    <text evidence="1">Catalyzes the conversion of dihydroorotate to orotate with quinone as electron acceptor.</text>
</comment>
<comment type="catalytic activity">
    <reaction evidence="1">
        <text>(S)-dihydroorotate + a quinone = orotate + a quinol</text>
        <dbReference type="Rhea" id="RHEA:30187"/>
        <dbReference type="ChEBI" id="CHEBI:24646"/>
        <dbReference type="ChEBI" id="CHEBI:30839"/>
        <dbReference type="ChEBI" id="CHEBI:30864"/>
        <dbReference type="ChEBI" id="CHEBI:132124"/>
        <dbReference type="EC" id="1.3.5.2"/>
    </reaction>
</comment>
<comment type="cofactor">
    <cofactor evidence="1">
        <name>FMN</name>
        <dbReference type="ChEBI" id="CHEBI:58210"/>
    </cofactor>
    <text evidence="1">Binds 1 FMN per subunit.</text>
</comment>
<comment type="pathway">
    <text evidence="1">Pyrimidine metabolism; UMP biosynthesis via de novo pathway; orotate from (S)-dihydroorotate (quinone route): step 1/1.</text>
</comment>
<comment type="subunit">
    <text evidence="1">Monomer.</text>
</comment>
<comment type="subcellular location">
    <subcellularLocation>
        <location evidence="1">Cell membrane</location>
        <topology evidence="1">Peripheral membrane protein</topology>
    </subcellularLocation>
</comment>
<comment type="similarity">
    <text evidence="1">Belongs to the dihydroorotate dehydrogenase family. Type 2 subfamily.</text>
</comment>
<sequence length="337" mass="36842">MNPYPHLRPLLFCLNPEIAHNLTLQILSRAAVFIPRIKAGNPIHLLGHTFPNRLGLAAGLDKNAVAISAFDRLGFGFIEVGTATPRPQSGNPKPRLFRLPEHQAIINCMGFNNDGVVALCQQVAAVKKRTRALIGINIGKNKLTPNERAADDYLIAMSTAYPYADYLAINISSPNTVGLRDLQHGAALCELLQRLKTERDKLSAVYEKTVPLLVKIAPDNEREQLDEMLSIIEDSGIDGIIATNTTLDKTAVTGHRYADEQGGLSGKPLTEKSTKIIAHIRERLPDLPLIASGGVMSADDYYAKLEAGADLVQIYSGLIYHGPQLIKDCLRMPSPQR</sequence>
<feature type="chain" id="PRO_1000024171" description="Dihydroorotate dehydrogenase (quinone)">
    <location>
        <begin position="1"/>
        <end position="337"/>
    </location>
</feature>
<feature type="active site" description="Nucleophile" evidence="1">
    <location>
        <position position="173"/>
    </location>
</feature>
<feature type="binding site" evidence="1">
    <location>
        <begin position="58"/>
        <end position="62"/>
    </location>
    <ligand>
        <name>FMN</name>
        <dbReference type="ChEBI" id="CHEBI:58210"/>
    </ligand>
</feature>
<feature type="binding site" evidence="1">
    <location>
        <position position="62"/>
    </location>
    <ligand>
        <name>substrate</name>
    </ligand>
</feature>
<feature type="binding site" evidence="1">
    <location>
        <position position="82"/>
    </location>
    <ligand>
        <name>FMN</name>
        <dbReference type="ChEBI" id="CHEBI:58210"/>
    </ligand>
</feature>
<feature type="binding site" evidence="1">
    <location>
        <begin position="107"/>
        <end position="111"/>
    </location>
    <ligand>
        <name>substrate</name>
    </ligand>
</feature>
<feature type="binding site" evidence="1">
    <location>
        <position position="137"/>
    </location>
    <ligand>
        <name>FMN</name>
        <dbReference type="ChEBI" id="CHEBI:58210"/>
    </ligand>
</feature>
<feature type="binding site" evidence="1">
    <location>
        <position position="170"/>
    </location>
    <ligand>
        <name>FMN</name>
        <dbReference type="ChEBI" id="CHEBI:58210"/>
    </ligand>
</feature>
<feature type="binding site" evidence="1">
    <location>
        <position position="170"/>
    </location>
    <ligand>
        <name>substrate</name>
    </ligand>
</feature>
<feature type="binding site" evidence="1">
    <location>
        <position position="175"/>
    </location>
    <ligand>
        <name>substrate</name>
    </ligand>
</feature>
<feature type="binding site" evidence="1">
    <location>
        <position position="215"/>
    </location>
    <ligand>
        <name>FMN</name>
        <dbReference type="ChEBI" id="CHEBI:58210"/>
    </ligand>
</feature>
<feature type="binding site" evidence="1">
    <location>
        <position position="243"/>
    </location>
    <ligand>
        <name>FMN</name>
        <dbReference type="ChEBI" id="CHEBI:58210"/>
    </ligand>
</feature>
<feature type="binding site" evidence="1">
    <location>
        <begin position="244"/>
        <end position="245"/>
    </location>
    <ligand>
        <name>substrate</name>
    </ligand>
</feature>
<feature type="binding site" evidence="1">
    <location>
        <position position="266"/>
    </location>
    <ligand>
        <name>FMN</name>
        <dbReference type="ChEBI" id="CHEBI:58210"/>
    </ligand>
</feature>
<feature type="binding site" evidence="1">
    <location>
        <position position="294"/>
    </location>
    <ligand>
        <name>FMN</name>
        <dbReference type="ChEBI" id="CHEBI:58210"/>
    </ligand>
</feature>
<feature type="binding site" evidence="1">
    <location>
        <begin position="315"/>
        <end position="316"/>
    </location>
    <ligand>
        <name>FMN</name>
        <dbReference type="ChEBI" id="CHEBI:58210"/>
    </ligand>
</feature>
<accession>A5EV79</accession>
<name>PYRD_DICNV</name>
<keyword id="KW-1003">Cell membrane</keyword>
<keyword id="KW-0285">Flavoprotein</keyword>
<keyword id="KW-0288">FMN</keyword>
<keyword id="KW-0472">Membrane</keyword>
<keyword id="KW-0560">Oxidoreductase</keyword>
<keyword id="KW-0665">Pyrimidine biosynthesis</keyword>
<keyword id="KW-1185">Reference proteome</keyword>
<protein>
    <recommendedName>
        <fullName evidence="1">Dihydroorotate dehydrogenase (quinone)</fullName>
        <ecNumber evidence="1">1.3.5.2</ecNumber>
    </recommendedName>
    <alternativeName>
        <fullName evidence="1">DHOdehase</fullName>
        <shortName evidence="1">DHOD</shortName>
        <shortName evidence="1">DHODase</shortName>
    </alternativeName>
    <alternativeName>
        <fullName evidence="1">Dihydroorotate oxidase</fullName>
    </alternativeName>
</protein>